<protein>
    <recommendedName>
        <fullName>Gametocyte-specific factor 1-like</fullName>
    </recommendedName>
    <alternativeName>
        <fullName>Protein FAM112A</fullName>
    </alternativeName>
</protein>
<sequence>MEPEAFEICPYDPHHRIPLSRFQYHLASCRRKNPKKAKKMATCKYNACHVVPIKNLEEHEAVCVNRSAVEEEDTENPLKVSPPSSEQNDDTQQVSPCLPSPDIWNVDGANCQHVFVLKTFFPQKVVCENDTKESARETSPQKILRPGQ</sequence>
<gene>
    <name type="primary">GTSF1L</name>
    <name type="synonym">C20orf65</name>
    <name type="synonym">FAM112A</name>
</gene>
<organism>
    <name type="scientific">Homo sapiens</name>
    <name type="common">Human</name>
    <dbReference type="NCBI Taxonomy" id="9606"/>
    <lineage>
        <taxon>Eukaryota</taxon>
        <taxon>Metazoa</taxon>
        <taxon>Chordata</taxon>
        <taxon>Craniata</taxon>
        <taxon>Vertebrata</taxon>
        <taxon>Euteleostomi</taxon>
        <taxon>Mammalia</taxon>
        <taxon>Eutheria</taxon>
        <taxon>Euarchontoglires</taxon>
        <taxon>Primates</taxon>
        <taxon>Haplorrhini</taxon>
        <taxon>Catarrhini</taxon>
        <taxon>Hominidae</taxon>
        <taxon>Homo</taxon>
    </lineage>
</organism>
<proteinExistence type="evidence at protein level"/>
<dbReference type="EMBL" id="AL121886">
    <property type="status" value="NOT_ANNOTATED_CDS"/>
    <property type="molecule type" value="Genomic_DNA"/>
</dbReference>
<dbReference type="EMBL" id="CH471077">
    <property type="protein sequence ID" value="EAW75950.1"/>
    <property type="molecule type" value="Genomic_DNA"/>
</dbReference>
<dbReference type="EMBL" id="BC040049">
    <property type="protein sequence ID" value="AAH40049.1"/>
    <property type="molecule type" value="mRNA"/>
</dbReference>
<dbReference type="CCDS" id="CCDS13323.1">
    <molecule id="Q9H1H1-1"/>
</dbReference>
<dbReference type="CCDS" id="CCDS33471.1">
    <molecule id="Q9H1H1-2"/>
</dbReference>
<dbReference type="RefSeq" id="NP_001008901.1">
    <molecule id="Q9H1H1-2"/>
    <property type="nucleotide sequence ID" value="NM_001008901.2"/>
</dbReference>
<dbReference type="RefSeq" id="NP_789761.1">
    <molecule id="Q9H1H1-1"/>
    <property type="nucleotide sequence ID" value="NM_176791.4"/>
</dbReference>
<dbReference type="SMR" id="Q9H1H1"/>
<dbReference type="BioGRID" id="127232">
    <property type="interactions" value="9"/>
</dbReference>
<dbReference type="FunCoup" id="Q9H1H1">
    <property type="interactions" value="1"/>
</dbReference>
<dbReference type="IntAct" id="Q9H1H1">
    <property type="interactions" value="6"/>
</dbReference>
<dbReference type="STRING" id="9606.ENSP00000362094"/>
<dbReference type="BioMuta" id="GTSF1L"/>
<dbReference type="DMDM" id="27734253"/>
<dbReference type="MassIVE" id="Q9H1H1"/>
<dbReference type="PaxDb" id="9606-ENSP00000362094"/>
<dbReference type="PeptideAtlas" id="Q9H1H1"/>
<dbReference type="ProteomicsDB" id="63392"/>
<dbReference type="ProteomicsDB" id="80408">
    <molecule id="Q9H1H1-1"/>
</dbReference>
<dbReference type="Antibodypedia" id="51807">
    <property type="antibodies" value="13 antibodies from 8 providers"/>
</dbReference>
<dbReference type="DNASU" id="149699"/>
<dbReference type="Ensembl" id="ENST00000373003.2">
    <molecule id="Q9H1H1-1"/>
    <property type="protein sequence ID" value="ENSP00000362094.1"/>
    <property type="gene ID" value="ENSG00000124196.6"/>
</dbReference>
<dbReference type="Ensembl" id="ENST00000373005.2">
    <molecule id="Q9H1H1-2"/>
    <property type="protein sequence ID" value="ENSP00000362096.2"/>
    <property type="gene ID" value="ENSG00000124196.6"/>
</dbReference>
<dbReference type="GeneID" id="149699"/>
<dbReference type="KEGG" id="hsa:149699"/>
<dbReference type="MANE-Select" id="ENST00000373003.2">
    <property type="protein sequence ID" value="ENSP00000362094.1"/>
    <property type="RefSeq nucleotide sequence ID" value="NM_176791.4"/>
    <property type="RefSeq protein sequence ID" value="NP_789761.1"/>
</dbReference>
<dbReference type="UCSC" id="uc002xlc.4">
    <molecule id="Q9H1H1-1"/>
    <property type="organism name" value="human"/>
</dbReference>
<dbReference type="AGR" id="HGNC:16198"/>
<dbReference type="CTD" id="149699"/>
<dbReference type="GeneCards" id="GTSF1L"/>
<dbReference type="HGNC" id="HGNC:16198">
    <property type="gene designation" value="GTSF1L"/>
</dbReference>
<dbReference type="HPA" id="ENSG00000124196">
    <property type="expression patterns" value="Tissue enriched (testis)"/>
</dbReference>
<dbReference type="neXtProt" id="NX_Q9H1H1"/>
<dbReference type="OpenTargets" id="ENSG00000124196"/>
<dbReference type="PharmGKB" id="PA25775"/>
<dbReference type="VEuPathDB" id="HostDB:ENSG00000124196"/>
<dbReference type="eggNOG" id="KOG4376">
    <property type="taxonomic scope" value="Eukaryota"/>
</dbReference>
<dbReference type="GeneTree" id="ENSGT00940000163226"/>
<dbReference type="HOGENOM" id="CLU_108762_1_0_1"/>
<dbReference type="InParanoid" id="Q9H1H1"/>
<dbReference type="OMA" id="DDPQQTF"/>
<dbReference type="OrthoDB" id="10069248at2759"/>
<dbReference type="PAN-GO" id="Q9H1H1">
    <property type="GO annotations" value="0 GO annotations based on evolutionary models"/>
</dbReference>
<dbReference type="PhylomeDB" id="Q9H1H1"/>
<dbReference type="TreeFam" id="TF323837"/>
<dbReference type="PathwayCommons" id="Q9H1H1"/>
<dbReference type="SignaLink" id="Q9H1H1"/>
<dbReference type="BioGRID-ORCS" id="149699">
    <property type="hits" value="8 hits in 1135 CRISPR screens"/>
</dbReference>
<dbReference type="GenomeRNAi" id="149699"/>
<dbReference type="Pharos" id="Q9H1H1">
    <property type="development level" value="Tdark"/>
</dbReference>
<dbReference type="PRO" id="PR:Q9H1H1"/>
<dbReference type="Proteomes" id="UP000005640">
    <property type="component" value="Chromosome 20"/>
</dbReference>
<dbReference type="RNAct" id="Q9H1H1">
    <property type="molecule type" value="protein"/>
</dbReference>
<dbReference type="Bgee" id="ENSG00000124196">
    <property type="expression patterns" value="Expressed in sperm and 101 other cell types or tissues"/>
</dbReference>
<dbReference type="GO" id="GO:0044877">
    <property type="term" value="F:protein-containing complex binding"/>
    <property type="evidence" value="ECO:0007669"/>
    <property type="project" value="Ensembl"/>
</dbReference>
<dbReference type="GO" id="GO:0008270">
    <property type="term" value="F:zinc ion binding"/>
    <property type="evidence" value="ECO:0007669"/>
    <property type="project" value="UniProtKB-KW"/>
</dbReference>
<dbReference type="InterPro" id="IPR022776">
    <property type="entry name" value="TRM13/UPF0224_CHHC_Znf_dom"/>
</dbReference>
<dbReference type="InterPro" id="IPR051591">
    <property type="entry name" value="UPF0224_FAM112_RNA_Proc"/>
</dbReference>
<dbReference type="InterPro" id="IPR036236">
    <property type="entry name" value="Znf_C2H2_sf"/>
</dbReference>
<dbReference type="PANTHER" id="PTHR21402">
    <property type="entry name" value="GAMETOCYTE SPECIFIC FACTOR 1-RELATED"/>
    <property type="match status" value="1"/>
</dbReference>
<dbReference type="PANTHER" id="PTHR21402:SF3">
    <property type="entry name" value="GAMETOCYTE-SPECIFIC FACTOR 1-LIKE"/>
    <property type="match status" value="1"/>
</dbReference>
<dbReference type="Pfam" id="PF05253">
    <property type="entry name" value="zf-U11-48K"/>
    <property type="match status" value="2"/>
</dbReference>
<dbReference type="SUPFAM" id="SSF57667">
    <property type="entry name" value="beta-beta-alpha zinc fingers"/>
    <property type="match status" value="1"/>
</dbReference>
<dbReference type="PROSITE" id="PS51800">
    <property type="entry name" value="ZF_CHHC_U11_48K"/>
    <property type="match status" value="2"/>
</dbReference>
<reference key="1">
    <citation type="journal article" date="2001" name="Nature">
        <title>The DNA sequence and comparative analysis of human chromosome 20.</title>
        <authorList>
            <person name="Deloukas P."/>
            <person name="Matthews L.H."/>
            <person name="Ashurst J.L."/>
            <person name="Burton J."/>
            <person name="Gilbert J.G.R."/>
            <person name="Jones M."/>
            <person name="Stavrides G."/>
            <person name="Almeida J.P."/>
            <person name="Babbage A.K."/>
            <person name="Bagguley C.L."/>
            <person name="Bailey J."/>
            <person name="Barlow K.F."/>
            <person name="Bates K.N."/>
            <person name="Beard L.M."/>
            <person name="Beare D.M."/>
            <person name="Beasley O.P."/>
            <person name="Bird C.P."/>
            <person name="Blakey S.E."/>
            <person name="Bridgeman A.M."/>
            <person name="Brown A.J."/>
            <person name="Buck D."/>
            <person name="Burrill W.D."/>
            <person name="Butler A.P."/>
            <person name="Carder C."/>
            <person name="Carter N.P."/>
            <person name="Chapman J.C."/>
            <person name="Clamp M."/>
            <person name="Clark G."/>
            <person name="Clark L.N."/>
            <person name="Clark S.Y."/>
            <person name="Clee C.M."/>
            <person name="Clegg S."/>
            <person name="Cobley V.E."/>
            <person name="Collier R.E."/>
            <person name="Connor R.E."/>
            <person name="Corby N.R."/>
            <person name="Coulson A."/>
            <person name="Coville G.J."/>
            <person name="Deadman R."/>
            <person name="Dhami P.D."/>
            <person name="Dunn M."/>
            <person name="Ellington A.G."/>
            <person name="Frankland J.A."/>
            <person name="Fraser A."/>
            <person name="French L."/>
            <person name="Garner P."/>
            <person name="Grafham D.V."/>
            <person name="Griffiths C."/>
            <person name="Griffiths M.N.D."/>
            <person name="Gwilliam R."/>
            <person name="Hall R.E."/>
            <person name="Hammond S."/>
            <person name="Harley J.L."/>
            <person name="Heath P.D."/>
            <person name="Ho S."/>
            <person name="Holden J.L."/>
            <person name="Howden P.J."/>
            <person name="Huckle E."/>
            <person name="Hunt A.R."/>
            <person name="Hunt S.E."/>
            <person name="Jekosch K."/>
            <person name="Johnson C.M."/>
            <person name="Johnson D."/>
            <person name="Kay M.P."/>
            <person name="Kimberley A.M."/>
            <person name="King A."/>
            <person name="Knights A."/>
            <person name="Laird G.K."/>
            <person name="Lawlor S."/>
            <person name="Lehvaeslaiho M.H."/>
            <person name="Leversha M.A."/>
            <person name="Lloyd C."/>
            <person name="Lloyd D.M."/>
            <person name="Lovell J.D."/>
            <person name="Marsh V.L."/>
            <person name="Martin S.L."/>
            <person name="McConnachie L.J."/>
            <person name="McLay K."/>
            <person name="McMurray A.A."/>
            <person name="Milne S.A."/>
            <person name="Mistry D."/>
            <person name="Moore M.J.F."/>
            <person name="Mullikin J.C."/>
            <person name="Nickerson T."/>
            <person name="Oliver K."/>
            <person name="Parker A."/>
            <person name="Patel R."/>
            <person name="Pearce T.A.V."/>
            <person name="Peck A.I."/>
            <person name="Phillimore B.J.C.T."/>
            <person name="Prathalingam S.R."/>
            <person name="Plumb R.W."/>
            <person name="Ramsay H."/>
            <person name="Rice C.M."/>
            <person name="Ross M.T."/>
            <person name="Scott C.E."/>
            <person name="Sehra H.K."/>
            <person name="Shownkeen R."/>
            <person name="Sims S."/>
            <person name="Skuce C.D."/>
            <person name="Smith M.L."/>
            <person name="Soderlund C."/>
            <person name="Steward C.A."/>
            <person name="Sulston J.E."/>
            <person name="Swann R.M."/>
            <person name="Sycamore N."/>
            <person name="Taylor R."/>
            <person name="Tee L."/>
            <person name="Thomas D.W."/>
            <person name="Thorpe A."/>
            <person name="Tracey A."/>
            <person name="Tromans A.C."/>
            <person name="Vaudin M."/>
            <person name="Wall M."/>
            <person name="Wallis J.M."/>
            <person name="Whitehead S.L."/>
            <person name="Whittaker P."/>
            <person name="Willey D.L."/>
            <person name="Williams L."/>
            <person name="Williams S.A."/>
            <person name="Wilming L."/>
            <person name="Wray P.W."/>
            <person name="Hubbard T."/>
            <person name="Durbin R.M."/>
            <person name="Bentley D.R."/>
            <person name="Beck S."/>
            <person name="Rogers J."/>
        </authorList>
    </citation>
    <scope>NUCLEOTIDE SEQUENCE [LARGE SCALE GENOMIC DNA]</scope>
</reference>
<reference key="2">
    <citation type="submission" date="2005-07" db="EMBL/GenBank/DDBJ databases">
        <authorList>
            <person name="Mural R.J."/>
            <person name="Istrail S."/>
            <person name="Sutton G.G."/>
            <person name="Florea L."/>
            <person name="Halpern A.L."/>
            <person name="Mobarry C.M."/>
            <person name="Lippert R."/>
            <person name="Walenz B."/>
            <person name="Shatkay H."/>
            <person name="Dew I."/>
            <person name="Miller J.R."/>
            <person name="Flanigan M.J."/>
            <person name="Edwards N.J."/>
            <person name="Bolanos R."/>
            <person name="Fasulo D."/>
            <person name="Halldorsson B.V."/>
            <person name="Hannenhalli S."/>
            <person name="Turner R."/>
            <person name="Yooseph S."/>
            <person name="Lu F."/>
            <person name="Nusskern D.R."/>
            <person name="Shue B.C."/>
            <person name="Zheng X.H."/>
            <person name="Zhong F."/>
            <person name="Delcher A.L."/>
            <person name="Huson D.H."/>
            <person name="Kravitz S.A."/>
            <person name="Mouchard L."/>
            <person name="Reinert K."/>
            <person name="Remington K.A."/>
            <person name="Clark A.G."/>
            <person name="Waterman M.S."/>
            <person name="Eichler E.E."/>
            <person name="Adams M.D."/>
            <person name="Hunkapiller M.W."/>
            <person name="Myers E.W."/>
            <person name="Venter J.C."/>
        </authorList>
    </citation>
    <scope>NUCLEOTIDE SEQUENCE [LARGE SCALE GENOMIC DNA]</scope>
</reference>
<reference key="3">
    <citation type="journal article" date="2004" name="Genome Res.">
        <title>The status, quality, and expansion of the NIH full-length cDNA project: the Mammalian Gene Collection (MGC).</title>
        <authorList>
            <consortium name="The MGC Project Team"/>
        </authorList>
    </citation>
    <scope>NUCLEOTIDE SEQUENCE [LARGE SCALE MRNA]</scope>
    <source>
        <tissue>Brain</tissue>
    </source>
</reference>
<reference key="4">
    <citation type="journal article" date="2008" name="Bioinformatics">
        <title>A novel CHHC Zn-finger domain found in spliceosomal proteins and tRNA modifying enzymes.</title>
        <authorList>
            <person name="Andreeva A."/>
            <person name="Tidow H."/>
        </authorList>
    </citation>
    <scope>DOMAIN CHHC ZINC-FINGER</scope>
</reference>
<feature type="chain" id="PRO_0000221619" description="Gametocyte-specific factor 1-like">
    <location>
        <begin position="1"/>
        <end position="148"/>
    </location>
</feature>
<feature type="zinc finger region" description="CHHC U11-48K-type 1" evidence="1">
    <location>
        <begin position="6"/>
        <end position="33"/>
    </location>
</feature>
<feature type="zinc finger region" description="CHHC U11-48K-type 2" evidence="1">
    <location>
        <begin position="40"/>
        <end position="67"/>
    </location>
</feature>
<feature type="region of interest" description="Disordered" evidence="2">
    <location>
        <begin position="67"/>
        <end position="99"/>
    </location>
</feature>
<feature type="compositionally biased region" description="Polar residues" evidence="2">
    <location>
        <begin position="82"/>
        <end position="95"/>
    </location>
</feature>
<feature type="binding site" evidence="1">
    <location>
        <position position="9"/>
    </location>
    <ligand>
        <name>Zn(2+)</name>
        <dbReference type="ChEBI" id="CHEBI:29105"/>
        <label>1</label>
    </ligand>
</feature>
<feature type="binding site" evidence="1">
    <location>
        <position position="15"/>
    </location>
    <ligand>
        <name>Zn(2+)</name>
        <dbReference type="ChEBI" id="CHEBI:29105"/>
        <label>1</label>
    </ligand>
</feature>
<feature type="binding site" evidence="1">
    <location>
        <position position="25"/>
    </location>
    <ligand>
        <name>Zn(2+)</name>
        <dbReference type="ChEBI" id="CHEBI:29105"/>
        <label>1</label>
    </ligand>
</feature>
<feature type="binding site" evidence="1">
    <location>
        <position position="29"/>
    </location>
    <ligand>
        <name>Zn(2+)</name>
        <dbReference type="ChEBI" id="CHEBI:29105"/>
        <label>1</label>
    </ligand>
</feature>
<feature type="binding site" evidence="1">
    <location>
        <position position="43"/>
    </location>
    <ligand>
        <name>Zn(2+)</name>
        <dbReference type="ChEBI" id="CHEBI:29105"/>
        <label>2</label>
    </ligand>
</feature>
<feature type="binding site" evidence="1">
    <location>
        <position position="49"/>
    </location>
    <ligand>
        <name>Zn(2+)</name>
        <dbReference type="ChEBI" id="CHEBI:29105"/>
        <label>2</label>
    </ligand>
</feature>
<feature type="binding site" evidence="1">
    <location>
        <position position="59"/>
    </location>
    <ligand>
        <name>Zn(2+)</name>
        <dbReference type="ChEBI" id="CHEBI:29105"/>
        <label>2</label>
    </ligand>
</feature>
<feature type="binding site" evidence="1">
    <location>
        <position position="63"/>
    </location>
    <ligand>
        <name>Zn(2+)</name>
        <dbReference type="ChEBI" id="CHEBI:29105"/>
        <label>2</label>
    </ligand>
</feature>
<feature type="splice variant" id="VSP_047166" description="In isoform 2.">
    <location>
        <begin position="94"/>
        <end position="118"/>
    </location>
</feature>
<feature type="sequence variant" id="VAR_052549" description="In dbSNP:rs17826038.">
    <original>L</original>
    <variation>V</variation>
    <location>
        <position position="56"/>
    </location>
</feature>
<evidence type="ECO:0000255" key="1">
    <source>
        <dbReference type="PROSITE-ProRule" id="PRU01141"/>
    </source>
</evidence>
<evidence type="ECO:0000256" key="2">
    <source>
        <dbReference type="SAM" id="MobiDB-lite"/>
    </source>
</evidence>
<accession>Q9H1H1</accession>
<accession>Q5JWH5</accession>
<keyword id="KW-0025">Alternative splicing</keyword>
<keyword id="KW-0479">Metal-binding</keyword>
<keyword id="KW-1267">Proteomics identification</keyword>
<keyword id="KW-1185">Reference proteome</keyword>
<keyword id="KW-0677">Repeat</keyword>
<keyword id="KW-0862">Zinc</keyword>
<keyword id="KW-0863">Zinc-finger</keyword>
<name>GTSFL_HUMAN</name>
<comment type="interaction">
    <interactant intactId="EBI-19128683">
        <id>Q9H1H1</id>
    </interactant>
    <interactant intactId="EBI-19954058">
        <id>O15499</id>
        <label>GSC2</label>
    </interactant>
    <organismsDiffer>false</organismsDiffer>
    <experiments>3</experiments>
</comment>
<comment type="interaction">
    <interactant intactId="EBI-19128683">
        <id>Q9H1H1</id>
    </interactant>
    <interactant intactId="EBI-12003732">
        <id>Q9NRZ9-6</id>
        <label>HELLS</label>
    </interactant>
    <organismsDiffer>false</organismsDiffer>
    <experiments>3</experiments>
</comment>
<comment type="alternative products">
    <event type="alternative splicing"/>
    <isoform>
        <id>Q9H1H1-1</id>
        <name>1</name>
        <sequence type="displayed"/>
    </isoform>
    <isoform>
        <id>Q9H1H1-2</id>
        <name>2</name>
        <sequence type="described" ref="VSP_047166"/>
    </isoform>
</comment>
<comment type="similarity">
    <text>Belongs to the UPF0224 (FAM112) family.</text>
</comment>